<proteinExistence type="inferred from homology"/>
<protein>
    <recommendedName>
        <fullName evidence="1">UvrABC system protein C</fullName>
        <shortName evidence="1">Protein UvrC</shortName>
    </recommendedName>
    <alternativeName>
        <fullName evidence="1">Excinuclease ABC subunit C</fullName>
    </alternativeName>
</protein>
<comment type="function">
    <text evidence="1">The UvrABC repair system catalyzes the recognition and processing of DNA lesions. UvrC both incises the 5' and 3' sides of the lesion. The N-terminal half is responsible for the 3' incision and the C-terminal half is responsible for the 5' incision.</text>
</comment>
<comment type="subunit">
    <text evidence="1">Interacts with UvrB in an incision complex.</text>
</comment>
<comment type="subcellular location">
    <subcellularLocation>
        <location evidence="1">Cytoplasm</location>
    </subcellularLocation>
</comment>
<comment type="similarity">
    <text evidence="1">Belongs to the UvrC family.</text>
</comment>
<evidence type="ECO:0000255" key="1">
    <source>
        <dbReference type="HAMAP-Rule" id="MF_00203"/>
    </source>
</evidence>
<feature type="chain" id="PRO_0000227424" description="UvrABC system protein C">
    <location>
        <begin position="1"/>
        <end position="607"/>
    </location>
</feature>
<feature type="domain" description="GIY-YIG" evidence="1">
    <location>
        <begin position="15"/>
        <end position="94"/>
    </location>
</feature>
<feature type="domain" description="UVR" evidence="1">
    <location>
        <begin position="204"/>
        <end position="239"/>
    </location>
</feature>
<gene>
    <name evidence="1" type="primary">uvrC</name>
    <name type="ordered locus">cbdbA1134</name>
</gene>
<organism>
    <name type="scientific">Dehalococcoides mccartyi (strain CBDB1)</name>
    <dbReference type="NCBI Taxonomy" id="255470"/>
    <lineage>
        <taxon>Bacteria</taxon>
        <taxon>Bacillati</taxon>
        <taxon>Chloroflexota</taxon>
        <taxon>Dehalococcoidia</taxon>
        <taxon>Dehalococcoidales</taxon>
        <taxon>Dehalococcoidaceae</taxon>
        <taxon>Dehalococcoides</taxon>
    </lineage>
</organism>
<name>UVRC_DEHMC</name>
<accession>Q3ZYA3</accession>
<sequence>MPNETLQNQIASLPENPGVYLMKNAQGEIIYVGKAAVLKDRVKSYFVPPSRLTPKTCQLVSQINELEYLITGSEQEALILELNLIKRHRPYFNVRLKDDKGFPYLKITLNEKWPRIYITRSMADDGGRYFGPFANTRSVRHTLQVLKELFRFRSCNRTEPEKHSRPCLEYDIHQCLSPCTGKISKSDYDHLISQAILFLEGKQDQVLKLLIRLMNEASARLDYETAALRRDQIASIKEVIEGQQLAARVTGEQDAIAFAQEGDLSMVQVFFIRRGKLIGRESFCLQGTREEKPGDILSEFAKQFYHSSTQIPPKIVTQYPVSDREILEKWLSQRRGDKVHITAGLRGQPKELINIVAENAREQLKQARIKNLSSSVTLTDALAELQTALGLSLPPQRIEGYDISNIQGTNAVGSMVVFENGKPQKAHYRRFRIKTVKGADDFSMLKEVISRRFGRVHREDAGESFARLPSLMLIDGGKGQLSSVKETLDKLGLEGQAVIGLAKEFEEIYLPHKSEPIRLAANSPALQLLQRVRDEAHRFALGYHLHIRQKSGLTSALDGIPGVGPSRRRLLIKTFGSVAGIRQASFEKLSQVKGINQALALSIKELL</sequence>
<dbReference type="EMBL" id="AJ965256">
    <property type="protein sequence ID" value="CAI83228.1"/>
    <property type="molecule type" value="Genomic_DNA"/>
</dbReference>
<dbReference type="RefSeq" id="WP_011309579.1">
    <property type="nucleotide sequence ID" value="NC_007356.1"/>
</dbReference>
<dbReference type="SMR" id="Q3ZYA3"/>
<dbReference type="KEGG" id="deh:cbdbA1134"/>
<dbReference type="HOGENOM" id="CLU_014841_3_2_0"/>
<dbReference type="Proteomes" id="UP000000433">
    <property type="component" value="Chromosome"/>
</dbReference>
<dbReference type="GO" id="GO:0005737">
    <property type="term" value="C:cytoplasm"/>
    <property type="evidence" value="ECO:0007669"/>
    <property type="project" value="UniProtKB-SubCell"/>
</dbReference>
<dbReference type="GO" id="GO:0009380">
    <property type="term" value="C:excinuclease repair complex"/>
    <property type="evidence" value="ECO:0007669"/>
    <property type="project" value="InterPro"/>
</dbReference>
<dbReference type="GO" id="GO:0003677">
    <property type="term" value="F:DNA binding"/>
    <property type="evidence" value="ECO:0007669"/>
    <property type="project" value="UniProtKB-UniRule"/>
</dbReference>
<dbReference type="GO" id="GO:0009381">
    <property type="term" value="F:excinuclease ABC activity"/>
    <property type="evidence" value="ECO:0007669"/>
    <property type="project" value="UniProtKB-UniRule"/>
</dbReference>
<dbReference type="GO" id="GO:0006289">
    <property type="term" value="P:nucleotide-excision repair"/>
    <property type="evidence" value="ECO:0007669"/>
    <property type="project" value="UniProtKB-UniRule"/>
</dbReference>
<dbReference type="GO" id="GO:0009432">
    <property type="term" value="P:SOS response"/>
    <property type="evidence" value="ECO:0007669"/>
    <property type="project" value="UniProtKB-UniRule"/>
</dbReference>
<dbReference type="CDD" id="cd10434">
    <property type="entry name" value="GIY-YIG_UvrC_Cho"/>
    <property type="match status" value="1"/>
</dbReference>
<dbReference type="FunFam" id="3.40.1440.10:FF:000001">
    <property type="entry name" value="UvrABC system protein C"/>
    <property type="match status" value="1"/>
</dbReference>
<dbReference type="Gene3D" id="1.10.150.20">
    <property type="entry name" value="5' to 3' exonuclease, C-terminal subdomain"/>
    <property type="match status" value="1"/>
</dbReference>
<dbReference type="Gene3D" id="3.40.1440.10">
    <property type="entry name" value="GIY-YIG endonuclease"/>
    <property type="match status" value="1"/>
</dbReference>
<dbReference type="Gene3D" id="3.30.420.340">
    <property type="entry name" value="UvrC, RNAse H endonuclease domain"/>
    <property type="match status" value="1"/>
</dbReference>
<dbReference type="HAMAP" id="MF_00203">
    <property type="entry name" value="UvrC"/>
    <property type="match status" value="1"/>
</dbReference>
<dbReference type="InterPro" id="IPR000305">
    <property type="entry name" value="GIY-YIG_endonuc"/>
</dbReference>
<dbReference type="InterPro" id="IPR035901">
    <property type="entry name" value="GIY-YIG_endonuc_sf"/>
</dbReference>
<dbReference type="InterPro" id="IPR047296">
    <property type="entry name" value="GIY-YIG_UvrC_Cho"/>
</dbReference>
<dbReference type="InterPro" id="IPR010994">
    <property type="entry name" value="RuvA_2-like"/>
</dbReference>
<dbReference type="InterPro" id="IPR001943">
    <property type="entry name" value="UVR_dom"/>
</dbReference>
<dbReference type="InterPro" id="IPR036876">
    <property type="entry name" value="UVR_dom_sf"/>
</dbReference>
<dbReference type="InterPro" id="IPR050066">
    <property type="entry name" value="UvrABC_protein_C"/>
</dbReference>
<dbReference type="InterPro" id="IPR004791">
    <property type="entry name" value="UvrC"/>
</dbReference>
<dbReference type="InterPro" id="IPR001162">
    <property type="entry name" value="UvrC_RNase_H_dom"/>
</dbReference>
<dbReference type="InterPro" id="IPR038476">
    <property type="entry name" value="UvrC_RNase_H_dom_sf"/>
</dbReference>
<dbReference type="NCBIfam" id="NF001824">
    <property type="entry name" value="PRK00558.1-5"/>
    <property type="match status" value="1"/>
</dbReference>
<dbReference type="NCBIfam" id="TIGR00194">
    <property type="entry name" value="uvrC"/>
    <property type="match status" value="1"/>
</dbReference>
<dbReference type="PANTHER" id="PTHR30562:SF1">
    <property type="entry name" value="UVRABC SYSTEM PROTEIN C"/>
    <property type="match status" value="1"/>
</dbReference>
<dbReference type="PANTHER" id="PTHR30562">
    <property type="entry name" value="UVRC/OXIDOREDUCTASE"/>
    <property type="match status" value="1"/>
</dbReference>
<dbReference type="Pfam" id="PF01541">
    <property type="entry name" value="GIY-YIG"/>
    <property type="match status" value="1"/>
</dbReference>
<dbReference type="Pfam" id="PF14520">
    <property type="entry name" value="HHH_5"/>
    <property type="match status" value="1"/>
</dbReference>
<dbReference type="Pfam" id="PF02151">
    <property type="entry name" value="UVR"/>
    <property type="match status" value="1"/>
</dbReference>
<dbReference type="Pfam" id="PF22920">
    <property type="entry name" value="UvrC_RNaseH"/>
    <property type="match status" value="1"/>
</dbReference>
<dbReference type="Pfam" id="PF08459">
    <property type="entry name" value="UvrC_RNaseH_dom"/>
    <property type="match status" value="1"/>
</dbReference>
<dbReference type="SMART" id="SM00465">
    <property type="entry name" value="GIYc"/>
    <property type="match status" value="1"/>
</dbReference>
<dbReference type="SUPFAM" id="SSF46600">
    <property type="entry name" value="C-terminal UvrC-binding domain of UvrB"/>
    <property type="match status" value="1"/>
</dbReference>
<dbReference type="SUPFAM" id="SSF82771">
    <property type="entry name" value="GIY-YIG endonuclease"/>
    <property type="match status" value="1"/>
</dbReference>
<dbReference type="SUPFAM" id="SSF47781">
    <property type="entry name" value="RuvA domain 2-like"/>
    <property type="match status" value="1"/>
</dbReference>
<dbReference type="PROSITE" id="PS50164">
    <property type="entry name" value="GIY_YIG"/>
    <property type="match status" value="1"/>
</dbReference>
<dbReference type="PROSITE" id="PS50151">
    <property type="entry name" value="UVR"/>
    <property type="match status" value="1"/>
</dbReference>
<dbReference type="PROSITE" id="PS50165">
    <property type="entry name" value="UVRC"/>
    <property type="match status" value="1"/>
</dbReference>
<keyword id="KW-0963">Cytoplasm</keyword>
<keyword id="KW-0227">DNA damage</keyword>
<keyword id="KW-0228">DNA excision</keyword>
<keyword id="KW-0234">DNA repair</keyword>
<keyword id="KW-0267">Excision nuclease</keyword>
<keyword id="KW-0742">SOS response</keyword>
<reference key="1">
    <citation type="journal article" date="2005" name="Nat. Biotechnol.">
        <title>Genome sequence of the chlorinated compound-respiring bacterium Dehalococcoides species strain CBDB1.</title>
        <authorList>
            <person name="Kube M."/>
            <person name="Beck A."/>
            <person name="Zinder S.H."/>
            <person name="Kuhl H."/>
            <person name="Reinhardt R."/>
            <person name="Adrian L."/>
        </authorList>
    </citation>
    <scope>NUCLEOTIDE SEQUENCE [LARGE SCALE GENOMIC DNA]</scope>
    <source>
        <strain>CBDB1</strain>
    </source>
</reference>